<keyword id="KW-0067">ATP-binding</keyword>
<keyword id="KW-0119">Carbohydrate metabolism</keyword>
<keyword id="KW-0418">Kinase</keyword>
<keyword id="KW-0460">Magnesium</keyword>
<keyword id="KW-0479">Metal-binding</keyword>
<keyword id="KW-0547">Nucleotide-binding</keyword>
<keyword id="KW-0808">Transferase</keyword>
<keyword id="KW-0862">Zinc</keyword>
<sequence>MLLGAIEAGGTKFVCATGAENGQVSDRISIPTTTPVETMTAVDDYFTTHPVDAIGIGSFGPIGVNPHDPKYGYITTTPKPGWGDFDFLGHLKSQFNIPLYWTTDVNEAAYGESMIGIAKDVPNSIYMTIGTGVGAGVISQNHIFNGRTHTELGHMRLNRLPGDDFKSNCPYHDICLEGLAAGPAVGKRTGKAGKDIPVDDPVWPIITDYIAQACVNLTVAFAPDKIILNGGVMNQRQLFPMIREKFAAYLNGYEEVPPLDDYIVPAGLGNNSGIAGGLLLAQAALKNA</sequence>
<name>SCRK_PEDPE</name>
<evidence type="ECO:0000250" key="1"/>
<evidence type="ECO:0000305" key="2"/>
<dbReference type="EC" id="2.7.1.4"/>
<dbReference type="EMBL" id="Z32771">
    <property type="protein sequence ID" value="CAA83667.1"/>
    <property type="molecule type" value="Genomic_DNA"/>
</dbReference>
<dbReference type="EMBL" id="L32093">
    <property type="protein sequence ID" value="AAA25565.1"/>
    <property type="molecule type" value="Genomic_DNA"/>
</dbReference>
<dbReference type="PIR" id="S44256">
    <property type="entry name" value="S44256"/>
</dbReference>
<dbReference type="SMR" id="P43468"/>
<dbReference type="GO" id="GO:0005524">
    <property type="term" value="F:ATP binding"/>
    <property type="evidence" value="ECO:0007669"/>
    <property type="project" value="UniProtKB-KW"/>
</dbReference>
<dbReference type="GO" id="GO:0008865">
    <property type="term" value="F:fructokinase activity"/>
    <property type="evidence" value="ECO:0007669"/>
    <property type="project" value="UniProtKB-EC"/>
</dbReference>
<dbReference type="GO" id="GO:0046872">
    <property type="term" value="F:metal ion binding"/>
    <property type="evidence" value="ECO:0007669"/>
    <property type="project" value="UniProtKB-KW"/>
</dbReference>
<dbReference type="CDD" id="cd24067">
    <property type="entry name" value="ASKHA_NBD_ROK_BsFRK-like"/>
    <property type="match status" value="1"/>
</dbReference>
<dbReference type="FunFam" id="3.30.420.40:FF:000136">
    <property type="entry name" value="Putative fructokinase"/>
    <property type="match status" value="1"/>
</dbReference>
<dbReference type="FunFam" id="3.30.420.40:FF:000153">
    <property type="entry name" value="Putative fructokinase"/>
    <property type="match status" value="1"/>
</dbReference>
<dbReference type="Gene3D" id="3.30.420.40">
    <property type="match status" value="2"/>
</dbReference>
<dbReference type="InterPro" id="IPR043129">
    <property type="entry name" value="ATPase_NBD"/>
</dbReference>
<dbReference type="InterPro" id="IPR051804">
    <property type="entry name" value="Carb_Metab_Reg_Kinase/Isom"/>
</dbReference>
<dbReference type="InterPro" id="IPR000600">
    <property type="entry name" value="ROK"/>
</dbReference>
<dbReference type="InterPro" id="IPR049874">
    <property type="entry name" value="ROK_cs"/>
</dbReference>
<dbReference type="PANTHER" id="PTHR42742:SF3">
    <property type="entry name" value="FRUCTOKINASE"/>
    <property type="match status" value="1"/>
</dbReference>
<dbReference type="PANTHER" id="PTHR42742">
    <property type="entry name" value="TRANSCRIPTIONAL REPRESSOR MPRA"/>
    <property type="match status" value="1"/>
</dbReference>
<dbReference type="Pfam" id="PF00480">
    <property type="entry name" value="ROK"/>
    <property type="match status" value="1"/>
</dbReference>
<dbReference type="SUPFAM" id="SSF53067">
    <property type="entry name" value="Actin-like ATPase domain"/>
    <property type="match status" value="1"/>
</dbReference>
<dbReference type="PROSITE" id="PS01125">
    <property type="entry name" value="ROK"/>
    <property type="match status" value="1"/>
</dbReference>
<organism>
    <name type="scientific">Pediococcus pentosaceus</name>
    <dbReference type="NCBI Taxonomy" id="1255"/>
    <lineage>
        <taxon>Bacteria</taxon>
        <taxon>Bacillati</taxon>
        <taxon>Bacillota</taxon>
        <taxon>Bacilli</taxon>
        <taxon>Lactobacillales</taxon>
        <taxon>Lactobacillaceae</taxon>
        <taxon>Pediococcus</taxon>
    </lineage>
</organism>
<comment type="catalytic activity">
    <reaction>
        <text>D-fructose + ATP = D-fructose 6-phosphate + ADP + H(+)</text>
        <dbReference type="Rhea" id="RHEA:16125"/>
        <dbReference type="ChEBI" id="CHEBI:15378"/>
        <dbReference type="ChEBI" id="CHEBI:30616"/>
        <dbReference type="ChEBI" id="CHEBI:37721"/>
        <dbReference type="ChEBI" id="CHEBI:61527"/>
        <dbReference type="ChEBI" id="CHEBI:456216"/>
        <dbReference type="EC" id="2.7.1.4"/>
    </reaction>
</comment>
<comment type="cofactor">
    <cofactor evidence="1">
        <name>Mg(2+)</name>
        <dbReference type="ChEBI" id="CHEBI:18420"/>
    </cofactor>
</comment>
<comment type="activity regulation">
    <text evidence="2">Inhibition by zinc ions.</text>
</comment>
<comment type="similarity">
    <text evidence="2">Belongs to the ROK (NagC/XylR) family.</text>
</comment>
<proteinExistence type="inferred from homology"/>
<feature type="chain" id="PRO_0000095685" description="Fructokinase">
    <location>
        <begin position="1"/>
        <end position="288"/>
    </location>
</feature>
<feature type="binding site" evidence="1">
    <location>
        <position position="131"/>
    </location>
    <ligand>
        <name>ATP</name>
        <dbReference type="ChEBI" id="CHEBI:30616"/>
    </ligand>
</feature>
<feature type="binding site" evidence="1">
    <location>
        <position position="154"/>
    </location>
    <ligand>
        <name>Zn(2+)</name>
        <dbReference type="ChEBI" id="CHEBI:29105"/>
    </ligand>
</feature>
<feature type="binding site" evidence="1">
    <location>
        <position position="169"/>
    </location>
    <ligand>
        <name>Zn(2+)</name>
        <dbReference type="ChEBI" id="CHEBI:29105"/>
    </ligand>
</feature>
<feature type="binding site" evidence="1">
    <location>
        <position position="172"/>
    </location>
    <ligand>
        <name>Zn(2+)</name>
        <dbReference type="ChEBI" id="CHEBI:29105"/>
    </ligand>
</feature>
<feature type="binding site" evidence="1">
    <location>
        <position position="175"/>
    </location>
    <ligand>
        <name>Zn(2+)</name>
        <dbReference type="ChEBI" id="CHEBI:29105"/>
    </ligand>
</feature>
<feature type="binding site" evidence="1">
    <location>
        <position position="183"/>
    </location>
    <ligand>
        <name>ATP</name>
        <dbReference type="ChEBI" id="CHEBI:30616"/>
    </ligand>
</feature>
<feature type="binding site" evidence="1">
    <location>
        <begin position="231"/>
        <end position="235"/>
    </location>
    <ligand>
        <name>ATP</name>
        <dbReference type="ChEBI" id="CHEBI:30616"/>
    </ligand>
</feature>
<gene>
    <name type="primary">scrK</name>
</gene>
<accession>P43468</accession>
<reference key="1">
    <citation type="submission" date="1994-04" db="EMBL/GenBank/DDBJ databases">
        <title>The sucrose and raffinose operons of Pediococcus pentosaceus PPE1.0.</title>
        <authorList>
            <person name="Leenhouts K.K.J."/>
            <person name="Bolhuis A.A."/>
            <person name="Kok J.J."/>
            <person name="Venema G.G."/>
        </authorList>
    </citation>
    <scope>NUCLEOTIDE SEQUENCE [GENOMIC DNA]</scope>
    <source>
        <strain>PPE1.0</strain>
    </source>
</reference>
<protein>
    <recommendedName>
        <fullName>Fructokinase</fullName>
        <ecNumber>2.7.1.4</ecNumber>
    </recommendedName>
</protein>